<protein>
    <recommendedName>
        <fullName evidence="1">Co-chaperonin GroES</fullName>
    </recommendedName>
    <alternativeName>
        <fullName evidence="1">10 kDa chaperonin</fullName>
    </alternativeName>
    <alternativeName>
        <fullName evidence="1">Chaperonin-10</fullName>
        <shortName evidence="1">Cpn10</shortName>
    </alternativeName>
</protein>
<gene>
    <name evidence="1" type="primary">groES</name>
    <name evidence="1" type="synonym">groS</name>
    <name type="ordered locus">PC1_0508</name>
</gene>
<proteinExistence type="inferred from homology"/>
<name>CH10_PECCP</name>
<organism>
    <name type="scientific">Pectobacterium carotovorum subsp. carotovorum (strain PC1)</name>
    <dbReference type="NCBI Taxonomy" id="561230"/>
    <lineage>
        <taxon>Bacteria</taxon>
        <taxon>Pseudomonadati</taxon>
        <taxon>Pseudomonadota</taxon>
        <taxon>Gammaproteobacteria</taxon>
        <taxon>Enterobacterales</taxon>
        <taxon>Pectobacteriaceae</taxon>
        <taxon>Pectobacterium</taxon>
    </lineage>
</organism>
<accession>C6DKC6</accession>
<feature type="chain" id="PRO_1000212122" description="Co-chaperonin GroES">
    <location>
        <begin position="1"/>
        <end position="97"/>
    </location>
</feature>
<evidence type="ECO:0000255" key="1">
    <source>
        <dbReference type="HAMAP-Rule" id="MF_00580"/>
    </source>
</evidence>
<dbReference type="EMBL" id="CP001657">
    <property type="protein sequence ID" value="ACT11563.1"/>
    <property type="molecule type" value="Genomic_DNA"/>
</dbReference>
<dbReference type="RefSeq" id="WP_005971295.1">
    <property type="nucleotide sequence ID" value="NC_012917.1"/>
</dbReference>
<dbReference type="SMR" id="C6DKC6"/>
<dbReference type="STRING" id="561230.PC1_0508"/>
<dbReference type="KEGG" id="pct:PC1_0508"/>
<dbReference type="eggNOG" id="COG0234">
    <property type="taxonomic scope" value="Bacteria"/>
</dbReference>
<dbReference type="HOGENOM" id="CLU_132825_1_1_6"/>
<dbReference type="OrthoDB" id="9806791at2"/>
<dbReference type="Proteomes" id="UP000002736">
    <property type="component" value="Chromosome"/>
</dbReference>
<dbReference type="GO" id="GO:0005737">
    <property type="term" value="C:cytoplasm"/>
    <property type="evidence" value="ECO:0007669"/>
    <property type="project" value="UniProtKB-SubCell"/>
</dbReference>
<dbReference type="GO" id="GO:0005524">
    <property type="term" value="F:ATP binding"/>
    <property type="evidence" value="ECO:0007669"/>
    <property type="project" value="InterPro"/>
</dbReference>
<dbReference type="GO" id="GO:0046872">
    <property type="term" value="F:metal ion binding"/>
    <property type="evidence" value="ECO:0007669"/>
    <property type="project" value="TreeGrafter"/>
</dbReference>
<dbReference type="GO" id="GO:0044183">
    <property type="term" value="F:protein folding chaperone"/>
    <property type="evidence" value="ECO:0007669"/>
    <property type="project" value="InterPro"/>
</dbReference>
<dbReference type="GO" id="GO:0051087">
    <property type="term" value="F:protein-folding chaperone binding"/>
    <property type="evidence" value="ECO:0007669"/>
    <property type="project" value="TreeGrafter"/>
</dbReference>
<dbReference type="GO" id="GO:0051082">
    <property type="term" value="F:unfolded protein binding"/>
    <property type="evidence" value="ECO:0007669"/>
    <property type="project" value="TreeGrafter"/>
</dbReference>
<dbReference type="GO" id="GO:0051085">
    <property type="term" value="P:chaperone cofactor-dependent protein refolding"/>
    <property type="evidence" value="ECO:0007669"/>
    <property type="project" value="TreeGrafter"/>
</dbReference>
<dbReference type="CDD" id="cd00320">
    <property type="entry name" value="cpn10"/>
    <property type="match status" value="1"/>
</dbReference>
<dbReference type="FunFam" id="2.30.33.40:FF:000001">
    <property type="entry name" value="10 kDa chaperonin"/>
    <property type="match status" value="1"/>
</dbReference>
<dbReference type="Gene3D" id="2.30.33.40">
    <property type="entry name" value="GroES chaperonin"/>
    <property type="match status" value="1"/>
</dbReference>
<dbReference type="HAMAP" id="MF_00580">
    <property type="entry name" value="CH10"/>
    <property type="match status" value="1"/>
</dbReference>
<dbReference type="InterPro" id="IPR020818">
    <property type="entry name" value="Chaperonin_GroES"/>
</dbReference>
<dbReference type="InterPro" id="IPR037124">
    <property type="entry name" value="Chaperonin_GroES_sf"/>
</dbReference>
<dbReference type="InterPro" id="IPR018369">
    <property type="entry name" value="Chaprnonin_Cpn10_CS"/>
</dbReference>
<dbReference type="InterPro" id="IPR011032">
    <property type="entry name" value="GroES-like_sf"/>
</dbReference>
<dbReference type="NCBIfam" id="NF001526">
    <property type="entry name" value="PRK00364.1-1"/>
    <property type="match status" value="1"/>
</dbReference>
<dbReference type="NCBIfam" id="NF001527">
    <property type="entry name" value="PRK00364.1-2"/>
    <property type="match status" value="1"/>
</dbReference>
<dbReference type="NCBIfam" id="NF001531">
    <property type="entry name" value="PRK00364.2-2"/>
    <property type="match status" value="1"/>
</dbReference>
<dbReference type="PANTHER" id="PTHR10772">
    <property type="entry name" value="10 KDA HEAT SHOCK PROTEIN"/>
    <property type="match status" value="1"/>
</dbReference>
<dbReference type="PANTHER" id="PTHR10772:SF58">
    <property type="entry name" value="CO-CHAPERONIN GROES"/>
    <property type="match status" value="1"/>
</dbReference>
<dbReference type="Pfam" id="PF00166">
    <property type="entry name" value="Cpn10"/>
    <property type="match status" value="1"/>
</dbReference>
<dbReference type="PRINTS" id="PR00297">
    <property type="entry name" value="CHAPERONIN10"/>
</dbReference>
<dbReference type="SMART" id="SM00883">
    <property type="entry name" value="Cpn10"/>
    <property type="match status" value="1"/>
</dbReference>
<dbReference type="SUPFAM" id="SSF50129">
    <property type="entry name" value="GroES-like"/>
    <property type="match status" value="1"/>
</dbReference>
<dbReference type="PROSITE" id="PS00681">
    <property type="entry name" value="CHAPERONINS_CPN10"/>
    <property type="match status" value="1"/>
</dbReference>
<comment type="function">
    <text evidence="1">Together with the chaperonin GroEL, plays an essential role in assisting protein folding. The GroEL-GroES system forms a nano-cage that allows encapsulation of the non-native substrate proteins and provides a physical environment optimized to promote and accelerate protein folding. GroES binds to the apical surface of the GroEL ring, thereby capping the opening of the GroEL channel.</text>
</comment>
<comment type="subunit">
    <text evidence="1">Heptamer of 7 subunits arranged in a ring. Interacts with the chaperonin GroEL.</text>
</comment>
<comment type="subcellular location">
    <subcellularLocation>
        <location evidence="1">Cytoplasm</location>
    </subcellularLocation>
</comment>
<comment type="similarity">
    <text evidence="1">Belongs to the GroES chaperonin family.</text>
</comment>
<sequence length="97" mass="10366">MNIRPLHDRVIVKRKEVESKSAGGIVLTGSAAGKSTRGEVLAVGHGRILENGEVKPLDVKVGDIVIFNDGYGVKAEKIDNEEVLIMSESDILAIVEA</sequence>
<reference key="1">
    <citation type="submission" date="2009-07" db="EMBL/GenBank/DDBJ databases">
        <title>Complete sequence of Pectobacterium carotovorum subsp. carotovorum PC1.</title>
        <authorList>
            <consortium name="US DOE Joint Genome Institute"/>
            <person name="Lucas S."/>
            <person name="Copeland A."/>
            <person name="Lapidus A."/>
            <person name="Glavina del Rio T."/>
            <person name="Tice H."/>
            <person name="Bruce D."/>
            <person name="Goodwin L."/>
            <person name="Pitluck S."/>
            <person name="Munk A.C."/>
            <person name="Brettin T."/>
            <person name="Detter J.C."/>
            <person name="Han C."/>
            <person name="Tapia R."/>
            <person name="Larimer F."/>
            <person name="Land M."/>
            <person name="Hauser L."/>
            <person name="Kyrpides N."/>
            <person name="Mikhailova N."/>
            <person name="Balakrishnan V."/>
            <person name="Glasner J."/>
            <person name="Perna N.T."/>
        </authorList>
    </citation>
    <scope>NUCLEOTIDE SEQUENCE [LARGE SCALE GENOMIC DNA]</scope>
    <source>
        <strain>PC1</strain>
    </source>
</reference>
<keyword id="KW-0143">Chaperone</keyword>
<keyword id="KW-0963">Cytoplasm</keyword>